<protein>
    <recommendedName>
        <fullName evidence="1">Ferritin, mitochondrial</fullName>
        <ecNumber evidence="1">1.16.3.1</ecNumber>
    </recommendedName>
</protein>
<gene>
    <name evidence="1" type="primary">FTMT</name>
</gene>
<name>FTMT_BOVIN</name>
<dbReference type="EC" id="1.16.3.1" evidence="1"/>
<dbReference type="EMBL" id="BC110199">
    <property type="protein sequence ID" value="AAI10200.1"/>
    <property type="molecule type" value="mRNA"/>
</dbReference>
<dbReference type="RefSeq" id="NP_001069658.1">
    <property type="nucleotide sequence ID" value="NM_001076190.1"/>
</dbReference>
<dbReference type="SMR" id="Q2YDI9"/>
<dbReference type="FunCoup" id="Q2YDI9">
    <property type="interactions" value="45"/>
</dbReference>
<dbReference type="STRING" id="9913.ENSBTAP00000041498"/>
<dbReference type="PaxDb" id="9913-ENSBTAP00000041498"/>
<dbReference type="GeneID" id="539838"/>
<dbReference type="KEGG" id="bta:539838"/>
<dbReference type="CTD" id="94033"/>
<dbReference type="eggNOG" id="KOG2332">
    <property type="taxonomic scope" value="Eukaryota"/>
</dbReference>
<dbReference type="InParanoid" id="Q2YDI9"/>
<dbReference type="OrthoDB" id="186462at2759"/>
<dbReference type="Proteomes" id="UP000009136">
    <property type="component" value="Unplaced"/>
</dbReference>
<dbReference type="GO" id="GO:0005737">
    <property type="term" value="C:cytoplasm"/>
    <property type="evidence" value="ECO:0000318"/>
    <property type="project" value="GO_Central"/>
</dbReference>
<dbReference type="GO" id="GO:0005739">
    <property type="term" value="C:mitochondrion"/>
    <property type="evidence" value="ECO:0000250"/>
    <property type="project" value="UniProtKB"/>
</dbReference>
<dbReference type="GO" id="GO:0008199">
    <property type="term" value="F:ferric iron binding"/>
    <property type="evidence" value="ECO:0000318"/>
    <property type="project" value="GO_Central"/>
</dbReference>
<dbReference type="GO" id="GO:0008198">
    <property type="term" value="F:ferrous iron binding"/>
    <property type="evidence" value="ECO:0000318"/>
    <property type="project" value="GO_Central"/>
</dbReference>
<dbReference type="GO" id="GO:0004322">
    <property type="term" value="F:ferroxidase activity"/>
    <property type="evidence" value="ECO:0000250"/>
    <property type="project" value="UniProtKB"/>
</dbReference>
<dbReference type="GO" id="GO:0005506">
    <property type="term" value="F:iron ion binding"/>
    <property type="evidence" value="ECO:0000250"/>
    <property type="project" value="UniProtKB"/>
</dbReference>
<dbReference type="GO" id="GO:0006879">
    <property type="term" value="P:intracellular iron ion homeostasis"/>
    <property type="evidence" value="ECO:0000250"/>
    <property type="project" value="UniProtKB"/>
</dbReference>
<dbReference type="GO" id="GO:0006826">
    <property type="term" value="P:iron ion transport"/>
    <property type="evidence" value="ECO:0007669"/>
    <property type="project" value="InterPro"/>
</dbReference>
<dbReference type="CDD" id="cd01056">
    <property type="entry name" value="Euk_Ferritin"/>
    <property type="match status" value="1"/>
</dbReference>
<dbReference type="FunFam" id="1.20.1260.10:FF:000016">
    <property type="entry name" value="Ferritin heavy chain"/>
    <property type="match status" value="1"/>
</dbReference>
<dbReference type="Gene3D" id="1.20.1260.10">
    <property type="match status" value="1"/>
</dbReference>
<dbReference type="InterPro" id="IPR001519">
    <property type="entry name" value="Ferritin"/>
</dbReference>
<dbReference type="InterPro" id="IPR012347">
    <property type="entry name" value="Ferritin-like"/>
</dbReference>
<dbReference type="InterPro" id="IPR009040">
    <property type="entry name" value="Ferritin-like_diiron"/>
</dbReference>
<dbReference type="InterPro" id="IPR009078">
    <property type="entry name" value="Ferritin-like_SF"/>
</dbReference>
<dbReference type="InterPro" id="IPR014034">
    <property type="entry name" value="Ferritin_CS"/>
</dbReference>
<dbReference type="InterPro" id="IPR008331">
    <property type="entry name" value="Ferritin_DPS_dom"/>
</dbReference>
<dbReference type="PANTHER" id="PTHR11431">
    <property type="entry name" value="FERRITIN"/>
    <property type="match status" value="1"/>
</dbReference>
<dbReference type="PANTHER" id="PTHR11431:SF30">
    <property type="entry name" value="FERRITIN, MITOCHONDRIAL"/>
    <property type="match status" value="1"/>
</dbReference>
<dbReference type="Pfam" id="PF00210">
    <property type="entry name" value="Ferritin"/>
    <property type="match status" value="1"/>
</dbReference>
<dbReference type="SUPFAM" id="SSF47240">
    <property type="entry name" value="Ferritin-like"/>
    <property type="match status" value="1"/>
</dbReference>
<dbReference type="PROSITE" id="PS00204">
    <property type="entry name" value="FERRITIN_2"/>
    <property type="match status" value="1"/>
</dbReference>
<dbReference type="PROSITE" id="PS50905">
    <property type="entry name" value="FERRITIN_LIKE"/>
    <property type="match status" value="1"/>
</dbReference>
<accession>Q2YDI9</accession>
<comment type="function">
    <text evidence="1">Catalyzes the oxidation of ferrous iron(II) to ferric iron(III) and stores iron in a soluble, non-toxic, readily available form. Important for iron homeostasis. Iron is taken up in the ferrous form and deposited as ferric hydroxides after oxidation.</text>
</comment>
<comment type="catalytic activity">
    <reaction evidence="1">
        <text>4 Fe(2+) + O2 + 4 H(+) = 4 Fe(3+) + 2 H2O</text>
        <dbReference type="Rhea" id="RHEA:11148"/>
        <dbReference type="ChEBI" id="CHEBI:15377"/>
        <dbReference type="ChEBI" id="CHEBI:15378"/>
        <dbReference type="ChEBI" id="CHEBI:15379"/>
        <dbReference type="ChEBI" id="CHEBI:29033"/>
        <dbReference type="ChEBI" id="CHEBI:29034"/>
        <dbReference type="EC" id="1.16.3.1"/>
    </reaction>
    <physiologicalReaction direction="left-to-right" evidence="1">
        <dbReference type="Rhea" id="RHEA:11149"/>
    </physiologicalReaction>
</comment>
<comment type="subunit">
    <text evidence="1">Homooligomer of 24 subunits. The functional molecule is roughly spherical and contains a central cavity into which the polymeric mineral iron core is deposited (By similarity).</text>
</comment>
<comment type="subcellular location">
    <subcellularLocation>
        <location evidence="1">Mitochondrion</location>
    </subcellularLocation>
</comment>
<comment type="similarity">
    <text evidence="4">Belongs to the ferritin family.</text>
</comment>
<keyword id="KW-0408">Iron</keyword>
<keyword id="KW-0409">Iron storage</keyword>
<keyword id="KW-0479">Metal-binding</keyword>
<keyword id="KW-0496">Mitochondrion</keyword>
<keyword id="KW-0560">Oxidoreductase</keyword>
<keyword id="KW-1185">Reference proteome</keyword>
<keyword id="KW-0809">Transit peptide</keyword>
<organism>
    <name type="scientific">Bos taurus</name>
    <name type="common">Bovine</name>
    <dbReference type="NCBI Taxonomy" id="9913"/>
    <lineage>
        <taxon>Eukaryota</taxon>
        <taxon>Metazoa</taxon>
        <taxon>Chordata</taxon>
        <taxon>Craniata</taxon>
        <taxon>Vertebrata</taxon>
        <taxon>Euteleostomi</taxon>
        <taxon>Mammalia</taxon>
        <taxon>Eutheria</taxon>
        <taxon>Laurasiatheria</taxon>
        <taxon>Artiodactyla</taxon>
        <taxon>Ruminantia</taxon>
        <taxon>Pecora</taxon>
        <taxon>Bovidae</taxon>
        <taxon>Bovinae</taxon>
        <taxon>Bos</taxon>
    </lineage>
</organism>
<sequence length="242" mass="27366">MLPCSLFLPKHISTSLVFLRSARHGFALLPRWVPRLSSDYPPAAPIRLLAAAASSRRPADGAGAPSRVRQNFHPDSEAAINRQINLELYASYVYLSMAYYFSRDDVALHNFARYFLRLSREEAEHAEKLMRLQNQRGGLICLQDIKKPDQNDWKSGLNAMECALLLEKNVNQSLLELHTLASDKGDPHLCDFLETHYLNEQVKSIKELGDHVNNLVKMGAPESGLAEYLFDKHTLGNENNHN</sequence>
<evidence type="ECO:0000250" key="1">
    <source>
        <dbReference type="UniProtKB" id="Q8N4E7"/>
    </source>
</evidence>
<evidence type="ECO:0000255" key="2"/>
<evidence type="ECO:0000255" key="3">
    <source>
        <dbReference type="PROSITE-ProRule" id="PRU00085"/>
    </source>
</evidence>
<evidence type="ECO:0000305" key="4"/>
<feature type="transit peptide" description="Mitochondrion" evidence="2">
    <location>
        <begin position="1"/>
        <end position="49"/>
    </location>
</feature>
<feature type="chain" id="PRO_0000252366" description="Ferritin, mitochondrial">
    <location>
        <begin position="50"/>
        <end position="242"/>
    </location>
</feature>
<feature type="domain" description="Ferritin-like diiron" evidence="3">
    <location>
        <begin position="70"/>
        <end position="219"/>
    </location>
</feature>
<feature type="binding site" evidence="1">
    <location>
        <position position="87"/>
    </location>
    <ligand>
        <name>Fe cation</name>
        <dbReference type="ChEBI" id="CHEBI:24875"/>
        <label>1</label>
    </ligand>
</feature>
<feature type="binding site" evidence="1">
    <location>
        <position position="122"/>
    </location>
    <ligand>
        <name>Fe cation</name>
        <dbReference type="ChEBI" id="CHEBI:24875"/>
        <label>1</label>
    </ligand>
</feature>
<feature type="binding site" evidence="1">
    <location>
        <position position="122"/>
    </location>
    <ligand>
        <name>Fe cation</name>
        <dbReference type="ChEBI" id="CHEBI:24875"/>
        <label>2</label>
    </ligand>
</feature>
<feature type="binding site" evidence="1">
    <location>
        <position position="125"/>
    </location>
    <ligand>
        <name>Fe cation</name>
        <dbReference type="ChEBI" id="CHEBI:24875"/>
        <label>1</label>
    </ligand>
</feature>
<feature type="binding site" evidence="1">
    <location>
        <position position="167"/>
    </location>
    <ligand>
        <name>Fe cation</name>
        <dbReference type="ChEBI" id="CHEBI:24875"/>
        <label>2</label>
    </ligand>
</feature>
<feature type="binding site" evidence="1">
    <location>
        <position position="201"/>
    </location>
    <ligand>
        <name>Fe cation</name>
        <dbReference type="ChEBI" id="CHEBI:24875"/>
        <label>2</label>
    </ligand>
</feature>
<reference key="1">
    <citation type="submission" date="2005-11" db="EMBL/GenBank/DDBJ databases">
        <authorList>
            <consortium name="NIH - Mammalian Gene Collection (MGC) project"/>
        </authorList>
    </citation>
    <scope>NUCLEOTIDE SEQUENCE [LARGE SCALE MRNA]</scope>
    <source>
        <strain>Crossbred X Angus</strain>
        <tissue>Liver</tissue>
    </source>
</reference>
<proteinExistence type="evidence at transcript level"/>